<organism>
    <name type="scientific">Prochlorococcus marinus (strain NATL1A)</name>
    <dbReference type="NCBI Taxonomy" id="167555"/>
    <lineage>
        <taxon>Bacteria</taxon>
        <taxon>Bacillati</taxon>
        <taxon>Cyanobacteriota</taxon>
        <taxon>Cyanophyceae</taxon>
        <taxon>Synechococcales</taxon>
        <taxon>Prochlorococcaceae</taxon>
        <taxon>Prochlorococcus</taxon>
    </lineage>
</organism>
<keyword id="KW-0963">Cytoplasm</keyword>
<keyword id="KW-0251">Elongation factor</keyword>
<keyword id="KW-0342">GTP-binding</keyword>
<keyword id="KW-0547">Nucleotide-binding</keyword>
<keyword id="KW-0648">Protein biosynthesis</keyword>
<accession>A2C4U6</accession>
<name>EFG_PROM1</name>
<evidence type="ECO:0000255" key="1">
    <source>
        <dbReference type="HAMAP-Rule" id="MF_00054"/>
    </source>
</evidence>
<proteinExistence type="inferred from homology"/>
<comment type="function">
    <text evidence="1">Catalyzes the GTP-dependent ribosomal translocation step during translation elongation. During this step, the ribosome changes from the pre-translocational (PRE) to the post-translocational (POST) state as the newly formed A-site-bound peptidyl-tRNA and P-site-bound deacylated tRNA move to the P and E sites, respectively. Catalyzes the coordinated movement of the two tRNA molecules, the mRNA and conformational changes in the ribosome.</text>
</comment>
<comment type="subcellular location">
    <subcellularLocation>
        <location evidence="1">Cytoplasm</location>
    </subcellularLocation>
</comment>
<comment type="similarity">
    <text evidence="1">Belongs to the TRAFAC class translation factor GTPase superfamily. Classic translation factor GTPase family. EF-G/EF-2 subfamily.</text>
</comment>
<gene>
    <name evidence="1" type="primary">fusA</name>
    <name type="ordered locus">NATL1_19501</name>
</gene>
<dbReference type="EMBL" id="CP000553">
    <property type="protein sequence ID" value="ABM76506.1"/>
    <property type="molecule type" value="Genomic_DNA"/>
</dbReference>
<dbReference type="RefSeq" id="WP_011824477.1">
    <property type="nucleotide sequence ID" value="NC_008819.1"/>
</dbReference>
<dbReference type="SMR" id="A2C4U6"/>
<dbReference type="KEGG" id="pme:NATL1_19501"/>
<dbReference type="eggNOG" id="COG0480">
    <property type="taxonomic scope" value="Bacteria"/>
</dbReference>
<dbReference type="HOGENOM" id="CLU_002794_4_1_3"/>
<dbReference type="Proteomes" id="UP000002592">
    <property type="component" value="Chromosome"/>
</dbReference>
<dbReference type="GO" id="GO:0005737">
    <property type="term" value="C:cytoplasm"/>
    <property type="evidence" value="ECO:0007669"/>
    <property type="project" value="UniProtKB-SubCell"/>
</dbReference>
<dbReference type="GO" id="GO:0005525">
    <property type="term" value="F:GTP binding"/>
    <property type="evidence" value="ECO:0007669"/>
    <property type="project" value="UniProtKB-UniRule"/>
</dbReference>
<dbReference type="GO" id="GO:0003924">
    <property type="term" value="F:GTPase activity"/>
    <property type="evidence" value="ECO:0007669"/>
    <property type="project" value="InterPro"/>
</dbReference>
<dbReference type="GO" id="GO:0003746">
    <property type="term" value="F:translation elongation factor activity"/>
    <property type="evidence" value="ECO:0007669"/>
    <property type="project" value="UniProtKB-UniRule"/>
</dbReference>
<dbReference type="GO" id="GO:0032790">
    <property type="term" value="P:ribosome disassembly"/>
    <property type="evidence" value="ECO:0007669"/>
    <property type="project" value="TreeGrafter"/>
</dbReference>
<dbReference type="CDD" id="cd01886">
    <property type="entry name" value="EF-G"/>
    <property type="match status" value="1"/>
</dbReference>
<dbReference type="CDD" id="cd16262">
    <property type="entry name" value="EFG_III"/>
    <property type="match status" value="1"/>
</dbReference>
<dbReference type="CDD" id="cd01434">
    <property type="entry name" value="EFG_mtEFG1_IV"/>
    <property type="match status" value="1"/>
</dbReference>
<dbReference type="CDD" id="cd03713">
    <property type="entry name" value="EFG_mtEFG_C"/>
    <property type="match status" value="1"/>
</dbReference>
<dbReference type="CDD" id="cd04088">
    <property type="entry name" value="EFG_mtEFG_II"/>
    <property type="match status" value="1"/>
</dbReference>
<dbReference type="FunFam" id="2.40.30.10:FF:000006">
    <property type="entry name" value="Elongation factor G"/>
    <property type="match status" value="1"/>
</dbReference>
<dbReference type="FunFam" id="3.30.230.10:FF:000003">
    <property type="entry name" value="Elongation factor G"/>
    <property type="match status" value="1"/>
</dbReference>
<dbReference type="FunFam" id="3.30.70.240:FF:000001">
    <property type="entry name" value="Elongation factor G"/>
    <property type="match status" value="1"/>
</dbReference>
<dbReference type="FunFam" id="3.30.70.870:FF:000001">
    <property type="entry name" value="Elongation factor G"/>
    <property type="match status" value="1"/>
</dbReference>
<dbReference type="FunFam" id="3.40.50.300:FF:000029">
    <property type="entry name" value="Elongation factor G"/>
    <property type="match status" value="1"/>
</dbReference>
<dbReference type="Gene3D" id="3.30.230.10">
    <property type="match status" value="1"/>
</dbReference>
<dbReference type="Gene3D" id="3.30.70.240">
    <property type="match status" value="1"/>
</dbReference>
<dbReference type="Gene3D" id="3.30.70.870">
    <property type="entry name" value="Elongation Factor G (Translational Gtpase), domain 3"/>
    <property type="match status" value="1"/>
</dbReference>
<dbReference type="Gene3D" id="3.40.50.300">
    <property type="entry name" value="P-loop containing nucleotide triphosphate hydrolases"/>
    <property type="match status" value="1"/>
</dbReference>
<dbReference type="Gene3D" id="2.40.30.10">
    <property type="entry name" value="Translation factors"/>
    <property type="match status" value="1"/>
</dbReference>
<dbReference type="HAMAP" id="MF_00054_B">
    <property type="entry name" value="EF_G_EF_2_B"/>
    <property type="match status" value="1"/>
</dbReference>
<dbReference type="InterPro" id="IPR041095">
    <property type="entry name" value="EFG_II"/>
</dbReference>
<dbReference type="InterPro" id="IPR009022">
    <property type="entry name" value="EFG_III"/>
</dbReference>
<dbReference type="InterPro" id="IPR035647">
    <property type="entry name" value="EFG_III/V"/>
</dbReference>
<dbReference type="InterPro" id="IPR047872">
    <property type="entry name" value="EFG_IV"/>
</dbReference>
<dbReference type="InterPro" id="IPR035649">
    <property type="entry name" value="EFG_V"/>
</dbReference>
<dbReference type="InterPro" id="IPR000640">
    <property type="entry name" value="EFG_V-like"/>
</dbReference>
<dbReference type="InterPro" id="IPR004161">
    <property type="entry name" value="EFTu-like_2"/>
</dbReference>
<dbReference type="InterPro" id="IPR031157">
    <property type="entry name" value="G_TR_CS"/>
</dbReference>
<dbReference type="InterPro" id="IPR027417">
    <property type="entry name" value="P-loop_NTPase"/>
</dbReference>
<dbReference type="InterPro" id="IPR020568">
    <property type="entry name" value="Ribosomal_Su5_D2-typ_SF"/>
</dbReference>
<dbReference type="InterPro" id="IPR014721">
    <property type="entry name" value="Ribsml_uS5_D2-typ_fold_subgr"/>
</dbReference>
<dbReference type="InterPro" id="IPR005225">
    <property type="entry name" value="Small_GTP-bd"/>
</dbReference>
<dbReference type="InterPro" id="IPR000795">
    <property type="entry name" value="T_Tr_GTP-bd_dom"/>
</dbReference>
<dbReference type="InterPro" id="IPR009000">
    <property type="entry name" value="Transl_B-barrel_sf"/>
</dbReference>
<dbReference type="InterPro" id="IPR004540">
    <property type="entry name" value="Transl_elong_EFG/EF2"/>
</dbReference>
<dbReference type="InterPro" id="IPR005517">
    <property type="entry name" value="Transl_elong_EFG/EF2_IV"/>
</dbReference>
<dbReference type="NCBIfam" id="TIGR00484">
    <property type="entry name" value="EF-G"/>
    <property type="match status" value="1"/>
</dbReference>
<dbReference type="NCBIfam" id="NF009379">
    <property type="entry name" value="PRK12740.1-3"/>
    <property type="match status" value="1"/>
</dbReference>
<dbReference type="NCBIfam" id="NF009381">
    <property type="entry name" value="PRK12740.1-5"/>
    <property type="match status" value="1"/>
</dbReference>
<dbReference type="NCBIfam" id="TIGR00231">
    <property type="entry name" value="small_GTP"/>
    <property type="match status" value="1"/>
</dbReference>
<dbReference type="PANTHER" id="PTHR43261:SF1">
    <property type="entry name" value="RIBOSOME-RELEASING FACTOR 2, MITOCHONDRIAL"/>
    <property type="match status" value="1"/>
</dbReference>
<dbReference type="PANTHER" id="PTHR43261">
    <property type="entry name" value="TRANSLATION ELONGATION FACTOR G-RELATED"/>
    <property type="match status" value="1"/>
</dbReference>
<dbReference type="Pfam" id="PF00679">
    <property type="entry name" value="EFG_C"/>
    <property type="match status" value="1"/>
</dbReference>
<dbReference type="Pfam" id="PF14492">
    <property type="entry name" value="EFG_III"/>
    <property type="match status" value="1"/>
</dbReference>
<dbReference type="Pfam" id="PF03764">
    <property type="entry name" value="EFG_IV"/>
    <property type="match status" value="1"/>
</dbReference>
<dbReference type="Pfam" id="PF00009">
    <property type="entry name" value="GTP_EFTU"/>
    <property type="match status" value="1"/>
</dbReference>
<dbReference type="Pfam" id="PF03144">
    <property type="entry name" value="GTP_EFTU_D2"/>
    <property type="match status" value="1"/>
</dbReference>
<dbReference type="PRINTS" id="PR00315">
    <property type="entry name" value="ELONGATNFCT"/>
</dbReference>
<dbReference type="SMART" id="SM00838">
    <property type="entry name" value="EFG_C"/>
    <property type="match status" value="1"/>
</dbReference>
<dbReference type="SMART" id="SM00889">
    <property type="entry name" value="EFG_IV"/>
    <property type="match status" value="1"/>
</dbReference>
<dbReference type="SUPFAM" id="SSF54980">
    <property type="entry name" value="EF-G C-terminal domain-like"/>
    <property type="match status" value="2"/>
</dbReference>
<dbReference type="SUPFAM" id="SSF52540">
    <property type="entry name" value="P-loop containing nucleoside triphosphate hydrolases"/>
    <property type="match status" value="1"/>
</dbReference>
<dbReference type="SUPFAM" id="SSF54211">
    <property type="entry name" value="Ribosomal protein S5 domain 2-like"/>
    <property type="match status" value="1"/>
</dbReference>
<dbReference type="SUPFAM" id="SSF50447">
    <property type="entry name" value="Translation proteins"/>
    <property type="match status" value="1"/>
</dbReference>
<dbReference type="PROSITE" id="PS00301">
    <property type="entry name" value="G_TR_1"/>
    <property type="match status" value="1"/>
</dbReference>
<dbReference type="PROSITE" id="PS51722">
    <property type="entry name" value="G_TR_2"/>
    <property type="match status" value="1"/>
</dbReference>
<sequence>MARAFPLERVRNIGIAAHIDAGKTTCTERILFYSGVVHKMGEVHDGAAVTDWMAQERERGITITAAAISTTWDDHRINIIDTPGHVDFTIEVERSMRVLDGVIAVFCAVGGVQPQSETVWRQADRYSVPRMVFVNKMDRTGADFLKVHGQIKDRLKANAVPIQLPIGAENDLKGIIDLVENKAYIYKDDLGKDIEQTEVPSDMVDLVSDWRLKLMESIAETEEELLEAFLENGELTIEQLKSGIREGVLKHGLVPMLCGSAFKNKGVQLLLDAVVNYLPAPVDVPPIQGLLPNGKEAVRPSDDGAPFSALAFKVMADPYGKLTFVRMYSGVLEKGSYVLNSTKDAKERISRLIILKADDREEVDELRAGDLGAVLGLKNTTTGDTLCASEEAIVLETLYIPEPVISVAVEPKTKSDMEKLGKALTSLSEEDPTFRVSTDQETNQTVIAGMGELHLEILVDRMLREFKVEANIGAPQVSYRETIRASSSGEGKFARQTGGKGQYGHVVIEVEPGEPGTGFEFVNKIVGGSVPKEYIKPAESGMRETCESGVIAGYPLIDVKVTLVDGSYHDVDSSEMAFKIAGSMAFKDGIKKCNPVLLEPMMKVEVEVPEDFLGSIIGDLSSRRGQVEGQSIEDGQSKVQSKVPLAEMFGYATQLRSMTQGRGIFSMEFSTYEEVPRNVAEAIISKNQGNS</sequence>
<reference key="1">
    <citation type="journal article" date="2007" name="PLoS Genet.">
        <title>Patterns and implications of gene gain and loss in the evolution of Prochlorococcus.</title>
        <authorList>
            <person name="Kettler G.C."/>
            <person name="Martiny A.C."/>
            <person name="Huang K."/>
            <person name="Zucker J."/>
            <person name="Coleman M.L."/>
            <person name="Rodrigue S."/>
            <person name="Chen F."/>
            <person name="Lapidus A."/>
            <person name="Ferriera S."/>
            <person name="Johnson J."/>
            <person name="Steglich C."/>
            <person name="Church G.M."/>
            <person name="Richardson P."/>
            <person name="Chisholm S.W."/>
        </authorList>
    </citation>
    <scope>NUCLEOTIDE SEQUENCE [LARGE SCALE GENOMIC DNA]</scope>
    <source>
        <strain>NATL1A</strain>
    </source>
</reference>
<feature type="chain" id="PRO_1000008866" description="Elongation factor G">
    <location>
        <begin position="1"/>
        <end position="691"/>
    </location>
</feature>
<feature type="domain" description="tr-type G">
    <location>
        <begin position="8"/>
        <end position="282"/>
    </location>
</feature>
<feature type="binding site" evidence="1">
    <location>
        <begin position="17"/>
        <end position="24"/>
    </location>
    <ligand>
        <name>GTP</name>
        <dbReference type="ChEBI" id="CHEBI:37565"/>
    </ligand>
</feature>
<feature type="binding site" evidence="1">
    <location>
        <begin position="81"/>
        <end position="85"/>
    </location>
    <ligand>
        <name>GTP</name>
        <dbReference type="ChEBI" id="CHEBI:37565"/>
    </ligand>
</feature>
<feature type="binding site" evidence="1">
    <location>
        <begin position="135"/>
        <end position="138"/>
    </location>
    <ligand>
        <name>GTP</name>
        <dbReference type="ChEBI" id="CHEBI:37565"/>
    </ligand>
</feature>
<protein>
    <recommendedName>
        <fullName evidence="1">Elongation factor G</fullName>
        <shortName evidence="1">EF-G</shortName>
    </recommendedName>
</protein>